<evidence type="ECO:0000250" key="1">
    <source>
        <dbReference type="UniProtKB" id="Q53TN4"/>
    </source>
</evidence>
<evidence type="ECO:0000250" key="2">
    <source>
        <dbReference type="UniProtKB" id="Q8K385"/>
    </source>
</evidence>
<evidence type="ECO:0000255" key="3"/>
<evidence type="ECO:0000255" key="4">
    <source>
        <dbReference type="PROSITE-ProRule" id="PRU00242"/>
    </source>
</evidence>
<evidence type="ECO:0000255" key="5">
    <source>
        <dbReference type="PROSITE-ProRule" id="PRU00246"/>
    </source>
</evidence>
<evidence type="ECO:0000255" key="6">
    <source>
        <dbReference type="PROSITE-ProRule" id="PRU00363"/>
    </source>
</evidence>
<evidence type="ECO:0000303" key="7">
    <source>
    </source>
</evidence>
<evidence type="ECO:0000305" key="8"/>
<accession>Q6ZNA5</accession>
<accession>A6NLN7</accession>
<gene>
    <name type="primary">FRRS1</name>
    <name type="synonym">SDFR2</name>
    <name type="synonym">SDR2</name>
</gene>
<proteinExistence type="evidence at protein level"/>
<reference key="1">
    <citation type="journal article" date="2004" name="Nat. Genet.">
        <title>Complete sequencing and characterization of 21,243 full-length human cDNAs.</title>
        <authorList>
            <person name="Ota T."/>
            <person name="Suzuki Y."/>
            <person name="Nishikawa T."/>
            <person name="Otsuki T."/>
            <person name="Sugiyama T."/>
            <person name="Irie R."/>
            <person name="Wakamatsu A."/>
            <person name="Hayashi K."/>
            <person name="Sato H."/>
            <person name="Nagai K."/>
            <person name="Kimura K."/>
            <person name="Makita H."/>
            <person name="Sekine M."/>
            <person name="Obayashi M."/>
            <person name="Nishi T."/>
            <person name="Shibahara T."/>
            <person name="Tanaka T."/>
            <person name="Ishii S."/>
            <person name="Yamamoto J."/>
            <person name="Saito K."/>
            <person name="Kawai Y."/>
            <person name="Isono Y."/>
            <person name="Nakamura Y."/>
            <person name="Nagahari K."/>
            <person name="Murakami K."/>
            <person name="Yasuda T."/>
            <person name="Iwayanagi T."/>
            <person name="Wagatsuma M."/>
            <person name="Shiratori A."/>
            <person name="Sudo H."/>
            <person name="Hosoiri T."/>
            <person name="Kaku Y."/>
            <person name="Kodaira H."/>
            <person name="Kondo H."/>
            <person name="Sugawara M."/>
            <person name="Takahashi M."/>
            <person name="Kanda K."/>
            <person name="Yokoi T."/>
            <person name="Furuya T."/>
            <person name="Kikkawa E."/>
            <person name="Omura Y."/>
            <person name="Abe K."/>
            <person name="Kamihara K."/>
            <person name="Katsuta N."/>
            <person name="Sato K."/>
            <person name="Tanikawa M."/>
            <person name="Yamazaki M."/>
            <person name="Ninomiya K."/>
            <person name="Ishibashi T."/>
            <person name="Yamashita H."/>
            <person name="Murakawa K."/>
            <person name="Fujimori K."/>
            <person name="Tanai H."/>
            <person name="Kimata M."/>
            <person name="Watanabe M."/>
            <person name="Hiraoka S."/>
            <person name="Chiba Y."/>
            <person name="Ishida S."/>
            <person name="Ono Y."/>
            <person name="Takiguchi S."/>
            <person name="Watanabe S."/>
            <person name="Yosida M."/>
            <person name="Hotuta T."/>
            <person name="Kusano J."/>
            <person name="Kanehori K."/>
            <person name="Takahashi-Fujii A."/>
            <person name="Hara H."/>
            <person name="Tanase T.-O."/>
            <person name="Nomura Y."/>
            <person name="Togiya S."/>
            <person name="Komai F."/>
            <person name="Hara R."/>
            <person name="Takeuchi K."/>
            <person name="Arita M."/>
            <person name="Imose N."/>
            <person name="Musashino K."/>
            <person name="Yuuki H."/>
            <person name="Oshima A."/>
            <person name="Sasaki N."/>
            <person name="Aotsuka S."/>
            <person name="Yoshikawa Y."/>
            <person name="Matsunawa H."/>
            <person name="Ichihara T."/>
            <person name="Shiohata N."/>
            <person name="Sano S."/>
            <person name="Moriya S."/>
            <person name="Momiyama H."/>
            <person name="Satoh N."/>
            <person name="Takami S."/>
            <person name="Terashima Y."/>
            <person name="Suzuki O."/>
            <person name="Nakagawa S."/>
            <person name="Senoh A."/>
            <person name="Mizoguchi H."/>
            <person name="Goto Y."/>
            <person name="Shimizu F."/>
            <person name="Wakebe H."/>
            <person name="Hishigaki H."/>
            <person name="Watanabe T."/>
            <person name="Sugiyama A."/>
            <person name="Takemoto M."/>
            <person name="Kawakami B."/>
            <person name="Yamazaki M."/>
            <person name="Watanabe K."/>
            <person name="Kumagai A."/>
            <person name="Itakura S."/>
            <person name="Fukuzumi Y."/>
            <person name="Fujimori Y."/>
            <person name="Komiyama M."/>
            <person name="Tashiro H."/>
            <person name="Tanigami A."/>
            <person name="Fujiwara T."/>
            <person name="Ono T."/>
            <person name="Yamada K."/>
            <person name="Fujii Y."/>
            <person name="Ozaki K."/>
            <person name="Hirao M."/>
            <person name="Ohmori Y."/>
            <person name="Kawabata A."/>
            <person name="Hikiji T."/>
            <person name="Kobatake N."/>
            <person name="Inagaki H."/>
            <person name="Ikema Y."/>
            <person name="Okamoto S."/>
            <person name="Okitani R."/>
            <person name="Kawakami T."/>
            <person name="Noguchi S."/>
            <person name="Itoh T."/>
            <person name="Shigeta K."/>
            <person name="Senba T."/>
            <person name="Matsumura K."/>
            <person name="Nakajima Y."/>
            <person name="Mizuno T."/>
            <person name="Morinaga M."/>
            <person name="Sasaki M."/>
            <person name="Togashi T."/>
            <person name="Oyama M."/>
            <person name="Hata H."/>
            <person name="Watanabe M."/>
            <person name="Komatsu T."/>
            <person name="Mizushima-Sugano J."/>
            <person name="Satoh T."/>
            <person name="Shirai Y."/>
            <person name="Takahashi Y."/>
            <person name="Nakagawa K."/>
            <person name="Okumura K."/>
            <person name="Nagase T."/>
            <person name="Nomura N."/>
            <person name="Kikuchi H."/>
            <person name="Masuho Y."/>
            <person name="Yamashita R."/>
            <person name="Nakai K."/>
            <person name="Yada T."/>
            <person name="Nakamura Y."/>
            <person name="Ohara O."/>
            <person name="Isogai T."/>
            <person name="Sugano S."/>
        </authorList>
    </citation>
    <scope>NUCLEOTIDE SEQUENCE [LARGE SCALE MRNA] (ISOFORM 2)</scope>
    <source>
        <tissue>Teratocarcinoma</tissue>
    </source>
</reference>
<reference key="2">
    <citation type="journal article" date="2006" name="Nature">
        <title>The DNA sequence and biological annotation of human chromosome 1.</title>
        <authorList>
            <person name="Gregory S.G."/>
            <person name="Barlow K.F."/>
            <person name="McLay K.E."/>
            <person name="Kaul R."/>
            <person name="Swarbreck D."/>
            <person name="Dunham A."/>
            <person name="Scott C.E."/>
            <person name="Howe K.L."/>
            <person name="Woodfine K."/>
            <person name="Spencer C.C.A."/>
            <person name="Jones M.C."/>
            <person name="Gillson C."/>
            <person name="Searle S."/>
            <person name="Zhou Y."/>
            <person name="Kokocinski F."/>
            <person name="McDonald L."/>
            <person name="Evans R."/>
            <person name="Phillips K."/>
            <person name="Atkinson A."/>
            <person name="Cooper R."/>
            <person name="Jones C."/>
            <person name="Hall R.E."/>
            <person name="Andrews T.D."/>
            <person name="Lloyd C."/>
            <person name="Ainscough R."/>
            <person name="Almeida J.P."/>
            <person name="Ambrose K.D."/>
            <person name="Anderson F."/>
            <person name="Andrew R.W."/>
            <person name="Ashwell R.I.S."/>
            <person name="Aubin K."/>
            <person name="Babbage A.K."/>
            <person name="Bagguley C.L."/>
            <person name="Bailey J."/>
            <person name="Beasley H."/>
            <person name="Bethel G."/>
            <person name="Bird C.P."/>
            <person name="Bray-Allen S."/>
            <person name="Brown J.Y."/>
            <person name="Brown A.J."/>
            <person name="Buckley D."/>
            <person name="Burton J."/>
            <person name="Bye J."/>
            <person name="Carder C."/>
            <person name="Chapman J.C."/>
            <person name="Clark S.Y."/>
            <person name="Clarke G."/>
            <person name="Clee C."/>
            <person name="Cobley V."/>
            <person name="Collier R.E."/>
            <person name="Corby N."/>
            <person name="Coville G.J."/>
            <person name="Davies J."/>
            <person name="Deadman R."/>
            <person name="Dunn M."/>
            <person name="Earthrowl M."/>
            <person name="Ellington A.G."/>
            <person name="Errington H."/>
            <person name="Frankish A."/>
            <person name="Frankland J."/>
            <person name="French L."/>
            <person name="Garner P."/>
            <person name="Garnett J."/>
            <person name="Gay L."/>
            <person name="Ghori M.R.J."/>
            <person name="Gibson R."/>
            <person name="Gilby L.M."/>
            <person name="Gillett W."/>
            <person name="Glithero R.J."/>
            <person name="Grafham D.V."/>
            <person name="Griffiths C."/>
            <person name="Griffiths-Jones S."/>
            <person name="Grocock R."/>
            <person name="Hammond S."/>
            <person name="Harrison E.S.I."/>
            <person name="Hart E."/>
            <person name="Haugen E."/>
            <person name="Heath P.D."/>
            <person name="Holmes S."/>
            <person name="Holt K."/>
            <person name="Howden P.J."/>
            <person name="Hunt A.R."/>
            <person name="Hunt S.E."/>
            <person name="Hunter G."/>
            <person name="Isherwood J."/>
            <person name="James R."/>
            <person name="Johnson C."/>
            <person name="Johnson D."/>
            <person name="Joy A."/>
            <person name="Kay M."/>
            <person name="Kershaw J.K."/>
            <person name="Kibukawa M."/>
            <person name="Kimberley A.M."/>
            <person name="King A."/>
            <person name="Knights A.J."/>
            <person name="Lad H."/>
            <person name="Laird G."/>
            <person name="Lawlor S."/>
            <person name="Leongamornlert D.A."/>
            <person name="Lloyd D.M."/>
            <person name="Loveland J."/>
            <person name="Lovell J."/>
            <person name="Lush M.J."/>
            <person name="Lyne R."/>
            <person name="Martin S."/>
            <person name="Mashreghi-Mohammadi M."/>
            <person name="Matthews L."/>
            <person name="Matthews N.S.W."/>
            <person name="McLaren S."/>
            <person name="Milne S."/>
            <person name="Mistry S."/>
            <person name="Moore M.J.F."/>
            <person name="Nickerson T."/>
            <person name="O'Dell C.N."/>
            <person name="Oliver K."/>
            <person name="Palmeiri A."/>
            <person name="Palmer S.A."/>
            <person name="Parker A."/>
            <person name="Patel D."/>
            <person name="Pearce A.V."/>
            <person name="Peck A.I."/>
            <person name="Pelan S."/>
            <person name="Phelps K."/>
            <person name="Phillimore B.J."/>
            <person name="Plumb R."/>
            <person name="Rajan J."/>
            <person name="Raymond C."/>
            <person name="Rouse G."/>
            <person name="Saenphimmachak C."/>
            <person name="Sehra H.K."/>
            <person name="Sheridan E."/>
            <person name="Shownkeen R."/>
            <person name="Sims S."/>
            <person name="Skuce C.D."/>
            <person name="Smith M."/>
            <person name="Steward C."/>
            <person name="Subramanian S."/>
            <person name="Sycamore N."/>
            <person name="Tracey A."/>
            <person name="Tromans A."/>
            <person name="Van Helmond Z."/>
            <person name="Wall M."/>
            <person name="Wallis J.M."/>
            <person name="White S."/>
            <person name="Whitehead S.L."/>
            <person name="Wilkinson J.E."/>
            <person name="Willey D.L."/>
            <person name="Williams H."/>
            <person name="Wilming L."/>
            <person name="Wray P.W."/>
            <person name="Wu Z."/>
            <person name="Coulson A."/>
            <person name="Vaudin M."/>
            <person name="Sulston J.E."/>
            <person name="Durbin R.M."/>
            <person name="Hubbard T."/>
            <person name="Wooster R."/>
            <person name="Dunham I."/>
            <person name="Carter N.P."/>
            <person name="McVean G."/>
            <person name="Ross M.T."/>
            <person name="Harrow J."/>
            <person name="Olson M.V."/>
            <person name="Beck S."/>
            <person name="Rogers J."/>
            <person name="Bentley D.R."/>
        </authorList>
    </citation>
    <scope>NUCLEOTIDE SEQUENCE [LARGE SCALE GENOMIC DNA]</scope>
</reference>
<reference key="3">
    <citation type="submission" date="2005-09" db="EMBL/GenBank/DDBJ databases">
        <authorList>
            <person name="Mural R.J."/>
            <person name="Istrail S."/>
            <person name="Sutton G.G."/>
            <person name="Florea L."/>
            <person name="Halpern A.L."/>
            <person name="Mobarry C.M."/>
            <person name="Lippert R."/>
            <person name="Walenz B."/>
            <person name="Shatkay H."/>
            <person name="Dew I."/>
            <person name="Miller J.R."/>
            <person name="Flanigan M.J."/>
            <person name="Edwards N.J."/>
            <person name="Bolanos R."/>
            <person name="Fasulo D."/>
            <person name="Halldorsson B.V."/>
            <person name="Hannenhalli S."/>
            <person name="Turner R."/>
            <person name="Yooseph S."/>
            <person name="Lu F."/>
            <person name="Nusskern D.R."/>
            <person name="Shue B.C."/>
            <person name="Zheng X.H."/>
            <person name="Zhong F."/>
            <person name="Delcher A.L."/>
            <person name="Huson D.H."/>
            <person name="Kravitz S.A."/>
            <person name="Mouchard L."/>
            <person name="Reinert K."/>
            <person name="Remington K.A."/>
            <person name="Clark A.G."/>
            <person name="Waterman M.S."/>
            <person name="Eichler E.E."/>
            <person name="Adams M.D."/>
            <person name="Hunkapiller M.W."/>
            <person name="Myers E.W."/>
            <person name="Venter J.C."/>
        </authorList>
    </citation>
    <scope>NUCLEOTIDE SEQUENCE [LARGE SCALE GENOMIC DNA]</scope>
</reference>
<reference key="4">
    <citation type="journal article" date="2005" name="Biochim. Biophys. Acta">
        <title>Cytochrome b561 protein family: expanding roles and versatile transmembrane electron transfer abilities as predicted by a new classification system and protein sequence motif analyses.</title>
        <authorList>
            <person name="Tsubaki M."/>
            <person name="Takeuchi F."/>
            <person name="Nakanishi N."/>
        </authorList>
    </citation>
    <scope>IDENTIFICATION</scope>
</reference>
<name>FRRS1_HUMAN</name>
<sequence>MAVSGFTLGTCILLLHISYVANYPNGKVTQSCHGMIPEHGHSPQSVPVHDIYVSQMTFRPGDQIEVTLSGHPFKGFLLEARNAEDLNGPPIGSFTLIDSEVSQLLTCEDIQGSAVSHRSASKKTEIKVYWNAPSSAPNHTQFLVTVVEKYKIYWVKIPGPIISQPNAFPFTTPKATVVPLPTLPPVSHLTKPFSASDCGNKKFCIRSPLNCDPEKEASCVFLSFTRDDQSVMVEMSGPSKGYLSFALSHDQWMGDDDAYLCIHEDQTVYIQPSHLTGRSHPVMDSRDTLEDMAWRLADGVMQCSFRRNITLPGVKNRFDLNTSYYIFLADGAANDGRIYKHSQQPLITYEKYDVTDSPKNIGGSHSVLLLKVHGALMFVAWMTTVSIGVLVARFFKPVWSKAFLLGEAAWFQVHRMLMFTTTVLTCIAFVMPFIYRGGWSRHAGYHPYLGCIVMTLAVLQPLLAVFRPPLHDPRRQMFNWTHWSMGTAARIIAVAAMFLGMDLPGLNLPDSWKTYAMTGFVAWHVGTEVVLEVHAYRLSRKVEILDDDRIQILQSFTAVETEGHAFKKAVLAIYVCGNVTFLIIFLSAINHL</sequence>
<comment type="function">
    <text evidence="2">Ferric-chelate reductases reduce Fe(3+) to Fe(2+) before its transport from the endosome to the cytoplasm.</text>
</comment>
<comment type="cofactor">
    <cofactor evidence="1">
        <name>heme b</name>
        <dbReference type="ChEBI" id="CHEBI:60344"/>
    </cofactor>
    <text evidence="1">Binds 2 heme b groups non-covalently.</text>
</comment>
<comment type="subcellular location">
    <subcellularLocation>
        <location evidence="8">Membrane</location>
        <topology evidence="8">Multi-pass membrane protein</topology>
    </subcellularLocation>
</comment>
<comment type="alternative products">
    <event type="alternative splicing"/>
    <isoform>
        <id>Q6ZNA5-1</id>
        <name>1</name>
        <sequence type="displayed"/>
    </isoform>
    <isoform>
        <id>Q6ZNA5-2</id>
        <name>2</name>
        <sequence type="described" ref="VSP_030400"/>
    </isoform>
</comment>
<comment type="similarity">
    <text evidence="8">Belongs to the FRRS1 family.</text>
</comment>
<feature type="chain" id="PRO_0000314843" description="Ferric-chelate reductase 1">
    <location>
        <begin position="1"/>
        <end position="592"/>
    </location>
</feature>
<feature type="transmembrane region" description="Helical; Name=1" evidence="3">
    <location>
        <begin position="2"/>
        <end position="22"/>
    </location>
</feature>
<feature type="transmembrane region" description="Helical; Name=2" evidence="3">
    <location>
        <begin position="372"/>
        <end position="392"/>
    </location>
</feature>
<feature type="transmembrane region" description="Helical; Name=3" evidence="3">
    <location>
        <begin position="415"/>
        <end position="435"/>
    </location>
</feature>
<feature type="transmembrane region" description="Helical; Name=4" evidence="3">
    <location>
        <begin position="446"/>
        <end position="466"/>
    </location>
</feature>
<feature type="transmembrane region" description="Helical; Name=5" evidence="3">
    <location>
        <begin position="491"/>
        <end position="511"/>
    </location>
</feature>
<feature type="transmembrane region" description="Helical; Name=6" evidence="3">
    <location>
        <begin position="515"/>
        <end position="535"/>
    </location>
</feature>
<feature type="transmembrane region" description="Helical; Name=7" evidence="3">
    <location>
        <begin position="569"/>
        <end position="589"/>
    </location>
</feature>
<feature type="domain" description="Reelin" evidence="6">
    <location>
        <begin position="13"/>
        <end position="179"/>
    </location>
</feature>
<feature type="domain" description="DOMON" evidence="5">
    <location>
        <begin position="216"/>
        <end position="331"/>
    </location>
</feature>
<feature type="domain" description="Cytochrome b561" evidence="4">
    <location>
        <begin position="335"/>
        <end position="534"/>
    </location>
</feature>
<feature type="binding site" description="axial binding residue" evidence="1">
    <location>
        <position position="373"/>
    </location>
    <ligand>
        <name>heme b</name>
        <dbReference type="ChEBI" id="CHEBI:60344"/>
        <label>1</label>
    </ligand>
    <ligandPart>
        <name>Fe</name>
        <dbReference type="ChEBI" id="CHEBI:18248"/>
    </ligandPart>
</feature>
<feature type="binding site" description="axial binding residue" evidence="1">
    <location>
        <position position="414"/>
    </location>
    <ligand>
        <name>heme b</name>
        <dbReference type="ChEBI" id="CHEBI:60344"/>
        <label>2</label>
    </ligand>
    <ligandPart>
        <name>Fe</name>
        <dbReference type="ChEBI" id="CHEBI:18248"/>
    </ligandPart>
</feature>
<feature type="binding site" description="axial binding residue" evidence="1">
    <location>
        <position position="446"/>
    </location>
    <ligand>
        <name>heme b</name>
        <dbReference type="ChEBI" id="CHEBI:60344"/>
        <label>1</label>
    </ligand>
    <ligandPart>
        <name>Fe</name>
        <dbReference type="ChEBI" id="CHEBI:18248"/>
    </ligandPart>
</feature>
<feature type="binding site" description="axial binding residue" evidence="1">
    <location>
        <position position="482"/>
    </location>
    <ligand>
        <name>heme b</name>
        <dbReference type="ChEBI" id="CHEBI:60344"/>
        <label>2</label>
    </ligand>
    <ligandPart>
        <name>Fe</name>
        <dbReference type="ChEBI" id="CHEBI:18248"/>
    </ligandPart>
</feature>
<feature type="glycosylation site" description="N-linked (GlcNAc...) asparagine" evidence="3">
    <location>
        <position position="138"/>
    </location>
</feature>
<feature type="glycosylation site" description="N-linked (GlcNAc...) asparagine" evidence="3">
    <location>
        <position position="308"/>
    </location>
</feature>
<feature type="glycosylation site" description="N-linked (GlcNAc...) asparagine" evidence="3">
    <location>
        <position position="321"/>
    </location>
</feature>
<feature type="splice variant" id="VSP_030400" description="In isoform 2." evidence="7">
    <original>VHAYRLSRKVEILDDDRIQILQSFTAVETEGHAFKKAVLAIYVCGNVTFLIIFLSAINHL</original>
    <variation>LKYWMMTEFRSFSHLLQWKQRVMLLKRQCWQFMSVGMLLFSSYFYLQSTIYEQAKTLAFAGQVIIIIKPKKLEACPDCLEHICEFSLGRLGSCL</variation>
    <location>
        <begin position="533"/>
        <end position="592"/>
    </location>
</feature>
<feature type="sequence conflict" description="In Ref. 1; BAD18470." evidence="8" ref="1">
    <original>P</original>
    <variation>L</variation>
    <location>
        <position position="179"/>
    </location>
</feature>
<organism>
    <name type="scientific">Homo sapiens</name>
    <name type="common">Human</name>
    <dbReference type="NCBI Taxonomy" id="9606"/>
    <lineage>
        <taxon>Eukaryota</taxon>
        <taxon>Metazoa</taxon>
        <taxon>Chordata</taxon>
        <taxon>Craniata</taxon>
        <taxon>Vertebrata</taxon>
        <taxon>Euteleostomi</taxon>
        <taxon>Mammalia</taxon>
        <taxon>Eutheria</taxon>
        <taxon>Euarchontoglires</taxon>
        <taxon>Primates</taxon>
        <taxon>Haplorrhini</taxon>
        <taxon>Catarrhini</taxon>
        <taxon>Hominidae</taxon>
        <taxon>Homo</taxon>
    </lineage>
</organism>
<dbReference type="EC" id="1.-.-.-"/>
<dbReference type="EMBL" id="AK131302">
    <property type="protein sequence ID" value="BAD18470.1"/>
    <property type="molecule type" value="mRNA"/>
</dbReference>
<dbReference type="EMBL" id="AL451051">
    <property type="status" value="NOT_ANNOTATED_CDS"/>
    <property type="molecule type" value="Genomic_DNA"/>
</dbReference>
<dbReference type="EMBL" id="CH471097">
    <property type="protein sequence ID" value="EAW72988.1"/>
    <property type="molecule type" value="Genomic_DNA"/>
</dbReference>
<dbReference type="CCDS" id="CCDS30780.1">
    <molecule id="Q6ZNA5-2"/>
</dbReference>
<dbReference type="CCDS" id="CCDS91007.1">
    <molecule id="Q6ZNA5-1"/>
</dbReference>
<dbReference type="RefSeq" id="NP_001013682.2">
    <molecule id="Q6ZNA5-2"/>
    <property type="nucleotide sequence ID" value="NM_001013660.4"/>
</dbReference>
<dbReference type="RefSeq" id="NP_001347970.1">
    <molecule id="Q6ZNA5-1"/>
    <property type="nucleotide sequence ID" value="NM_001361041.2"/>
</dbReference>
<dbReference type="RefSeq" id="XP_005270918.1">
    <property type="nucleotide sequence ID" value="XM_005270861.3"/>
</dbReference>
<dbReference type="RefSeq" id="XP_011539753.1">
    <molecule id="Q6ZNA5-1"/>
    <property type="nucleotide sequence ID" value="XM_011541451.4"/>
</dbReference>
<dbReference type="RefSeq" id="XP_016856760.1">
    <molecule id="Q6ZNA5-1"/>
    <property type="nucleotide sequence ID" value="XM_017001271.2"/>
</dbReference>
<dbReference type="RefSeq" id="XP_047276195.1">
    <molecule id="Q6ZNA5-1"/>
    <property type="nucleotide sequence ID" value="XM_047420239.1"/>
</dbReference>
<dbReference type="RefSeq" id="XP_054192511.1">
    <molecule id="Q6ZNA5-1"/>
    <property type="nucleotide sequence ID" value="XM_054336536.1"/>
</dbReference>
<dbReference type="RefSeq" id="XP_054192512.1">
    <molecule id="Q6ZNA5-1"/>
    <property type="nucleotide sequence ID" value="XM_054336537.1"/>
</dbReference>
<dbReference type="SMR" id="Q6ZNA5"/>
<dbReference type="BioGRID" id="133787">
    <property type="interactions" value="3"/>
</dbReference>
<dbReference type="FunCoup" id="Q6ZNA5">
    <property type="interactions" value="41"/>
</dbReference>
<dbReference type="STRING" id="9606.ENSP00000287474"/>
<dbReference type="GlyCosmos" id="Q6ZNA5">
    <property type="glycosylation" value="4 sites, 1 glycan"/>
</dbReference>
<dbReference type="GlyGen" id="Q6ZNA5">
    <property type="glycosylation" value="6 sites, 4 N-linked glycans (2 sites), 3 O-linked glycans (3 sites)"/>
</dbReference>
<dbReference type="iPTMnet" id="Q6ZNA5"/>
<dbReference type="PhosphoSitePlus" id="Q6ZNA5"/>
<dbReference type="BioMuta" id="FRRS1"/>
<dbReference type="DMDM" id="166198896"/>
<dbReference type="jPOST" id="Q6ZNA5"/>
<dbReference type="MassIVE" id="Q6ZNA5"/>
<dbReference type="PaxDb" id="9606-ENSP00000287474"/>
<dbReference type="PeptideAtlas" id="Q6ZNA5"/>
<dbReference type="ProteomicsDB" id="68005">
    <molecule id="Q6ZNA5-1"/>
</dbReference>
<dbReference type="ProteomicsDB" id="68006">
    <molecule id="Q6ZNA5-2"/>
</dbReference>
<dbReference type="Pumba" id="Q6ZNA5"/>
<dbReference type="Antibodypedia" id="19970">
    <property type="antibodies" value="9 antibodies from 7 providers"/>
</dbReference>
<dbReference type="DNASU" id="391059"/>
<dbReference type="Ensembl" id="ENST00000287474.9">
    <molecule id="Q6ZNA5-2"/>
    <property type="protein sequence ID" value="ENSP00000287474.4"/>
    <property type="gene ID" value="ENSG00000156869.14"/>
</dbReference>
<dbReference type="Ensembl" id="ENST00000646001.2">
    <molecule id="Q6ZNA5-1"/>
    <property type="protein sequence ID" value="ENSP00000496583.2"/>
    <property type="gene ID" value="ENSG00000156869.14"/>
</dbReference>
<dbReference type="GeneID" id="391059"/>
<dbReference type="KEGG" id="hsa:391059"/>
<dbReference type="MANE-Select" id="ENST00000646001.2">
    <property type="protein sequence ID" value="ENSP00000496583.2"/>
    <property type="RefSeq nucleotide sequence ID" value="NM_001361041.2"/>
    <property type="RefSeq protein sequence ID" value="NP_001347970.1"/>
</dbReference>
<dbReference type="UCSC" id="uc001dsh.1">
    <molecule id="Q6ZNA5-1"/>
    <property type="organism name" value="human"/>
</dbReference>
<dbReference type="AGR" id="HGNC:27622"/>
<dbReference type="CTD" id="391059"/>
<dbReference type="DisGeNET" id="391059"/>
<dbReference type="GeneCards" id="FRRS1"/>
<dbReference type="HGNC" id="HGNC:27622">
    <property type="gene designation" value="FRRS1"/>
</dbReference>
<dbReference type="HPA" id="ENSG00000156869">
    <property type="expression patterns" value="Tissue enhanced (liver)"/>
</dbReference>
<dbReference type="MIM" id="611578">
    <property type="type" value="gene"/>
</dbReference>
<dbReference type="neXtProt" id="NX_Q6ZNA5"/>
<dbReference type="OpenTargets" id="ENSG00000156869"/>
<dbReference type="PharmGKB" id="PA142670941"/>
<dbReference type="VEuPathDB" id="HostDB:ENSG00000156869"/>
<dbReference type="eggNOG" id="KOG4293">
    <property type="taxonomic scope" value="Eukaryota"/>
</dbReference>
<dbReference type="GeneTree" id="ENSGT00940000157704"/>
<dbReference type="HOGENOM" id="CLU_028305_0_0_1"/>
<dbReference type="InParanoid" id="Q6ZNA5"/>
<dbReference type="OMA" id="KVYWKAP"/>
<dbReference type="OrthoDB" id="6372137at2759"/>
<dbReference type="PAN-GO" id="Q6ZNA5">
    <property type="GO annotations" value="3 GO annotations based on evolutionary models"/>
</dbReference>
<dbReference type="PhylomeDB" id="Q6ZNA5"/>
<dbReference type="TreeFam" id="TF316169"/>
<dbReference type="PathwayCommons" id="Q6ZNA5"/>
<dbReference type="BioGRID-ORCS" id="391059">
    <property type="hits" value="15 hits in 1159 CRISPR screens"/>
</dbReference>
<dbReference type="ChiTaRS" id="FRRS1">
    <property type="organism name" value="human"/>
</dbReference>
<dbReference type="GenomeRNAi" id="391059"/>
<dbReference type="Pharos" id="Q6ZNA5">
    <property type="development level" value="Tdark"/>
</dbReference>
<dbReference type="PRO" id="PR:Q6ZNA5"/>
<dbReference type="Proteomes" id="UP000005640">
    <property type="component" value="Chromosome 1"/>
</dbReference>
<dbReference type="RNAct" id="Q6ZNA5">
    <property type="molecule type" value="protein"/>
</dbReference>
<dbReference type="Bgee" id="ENSG00000156869">
    <property type="expression patterns" value="Expressed in buccal mucosa cell and 145 other cell types or tissues"/>
</dbReference>
<dbReference type="GO" id="GO:0016020">
    <property type="term" value="C:membrane"/>
    <property type="evidence" value="ECO:0000318"/>
    <property type="project" value="GO_Central"/>
</dbReference>
<dbReference type="GO" id="GO:0046872">
    <property type="term" value="F:metal ion binding"/>
    <property type="evidence" value="ECO:0007669"/>
    <property type="project" value="UniProtKB-KW"/>
</dbReference>
<dbReference type="GO" id="GO:0016722">
    <property type="term" value="F:oxidoreductase activity, acting on metal ions"/>
    <property type="evidence" value="ECO:0000250"/>
    <property type="project" value="HGNC"/>
</dbReference>
<dbReference type="GO" id="GO:0006879">
    <property type="term" value="P:intracellular iron ion homeostasis"/>
    <property type="evidence" value="ECO:0000250"/>
    <property type="project" value="ARUK-UCL"/>
</dbReference>
<dbReference type="CDD" id="cd08760">
    <property type="entry name" value="Cyt_b561_FRRS1_like"/>
    <property type="match status" value="1"/>
</dbReference>
<dbReference type="CDD" id="cd09628">
    <property type="entry name" value="DOMON_SDR_2_like"/>
    <property type="match status" value="1"/>
</dbReference>
<dbReference type="CDD" id="cd08544">
    <property type="entry name" value="Reeler"/>
    <property type="match status" value="1"/>
</dbReference>
<dbReference type="FunFam" id="1.20.120.1770:FF:000003">
    <property type="entry name" value="Ferric chelate reductase 1"/>
    <property type="match status" value="1"/>
</dbReference>
<dbReference type="FunFam" id="2.60.40.4060:FF:000003">
    <property type="entry name" value="Ferric chelate reductase 1"/>
    <property type="match status" value="1"/>
</dbReference>
<dbReference type="Gene3D" id="1.20.120.1770">
    <property type="match status" value="1"/>
</dbReference>
<dbReference type="Gene3D" id="2.60.40.4060">
    <property type="entry name" value="Reeler domain"/>
    <property type="match status" value="1"/>
</dbReference>
<dbReference type="InterPro" id="IPR006593">
    <property type="entry name" value="Cyt_b561/ferric_Rdtase_TM"/>
</dbReference>
<dbReference type="InterPro" id="IPR005018">
    <property type="entry name" value="DOMON_domain"/>
</dbReference>
<dbReference type="InterPro" id="IPR051237">
    <property type="entry name" value="Ferric-chelate_Red/DefProt"/>
</dbReference>
<dbReference type="InterPro" id="IPR002861">
    <property type="entry name" value="Reeler_dom"/>
</dbReference>
<dbReference type="InterPro" id="IPR042307">
    <property type="entry name" value="Reeler_sf"/>
</dbReference>
<dbReference type="PANTHER" id="PTHR45828">
    <property type="entry name" value="CYTOCHROME B561/FERRIC REDUCTASE TRANSMEMBRANE"/>
    <property type="match status" value="1"/>
</dbReference>
<dbReference type="PANTHER" id="PTHR45828:SF3">
    <property type="entry name" value="FERRIC-CHELATE REDUCTASE 1"/>
    <property type="match status" value="1"/>
</dbReference>
<dbReference type="Pfam" id="PF03351">
    <property type="entry name" value="DOMON"/>
    <property type="match status" value="1"/>
</dbReference>
<dbReference type="Pfam" id="PF02014">
    <property type="entry name" value="Reeler"/>
    <property type="match status" value="1"/>
</dbReference>
<dbReference type="SMART" id="SM00665">
    <property type="entry name" value="B561"/>
    <property type="match status" value="1"/>
</dbReference>
<dbReference type="SMART" id="SM00664">
    <property type="entry name" value="DoH"/>
    <property type="match status" value="1"/>
</dbReference>
<dbReference type="PROSITE" id="PS50939">
    <property type="entry name" value="CYTOCHROME_B561"/>
    <property type="match status" value="1"/>
</dbReference>
<dbReference type="PROSITE" id="PS50836">
    <property type="entry name" value="DOMON"/>
    <property type="match status" value="1"/>
</dbReference>
<dbReference type="PROSITE" id="PS51019">
    <property type="entry name" value="REELIN"/>
    <property type="match status" value="1"/>
</dbReference>
<keyword id="KW-0025">Alternative splicing</keyword>
<keyword id="KW-0249">Electron transport</keyword>
<keyword id="KW-0325">Glycoprotein</keyword>
<keyword id="KW-0349">Heme</keyword>
<keyword id="KW-0408">Iron</keyword>
<keyword id="KW-0472">Membrane</keyword>
<keyword id="KW-0479">Metal-binding</keyword>
<keyword id="KW-0560">Oxidoreductase</keyword>
<keyword id="KW-1267">Proteomics identification</keyword>
<keyword id="KW-1185">Reference proteome</keyword>
<keyword id="KW-0812">Transmembrane</keyword>
<keyword id="KW-1133">Transmembrane helix</keyword>
<keyword id="KW-0813">Transport</keyword>
<protein>
    <recommendedName>
        <fullName>Ferric-chelate reductase 1</fullName>
        <ecNumber>1.-.-.-</ecNumber>
    </recommendedName>
    <alternativeName>
        <fullName>Stromal cell-derived receptor 2</fullName>
        <shortName>SDR-2</shortName>
    </alternativeName>
</protein>